<sequence>KDGYPMDSKGCKISCLISDTFCDTECKMKKAKSGYCYSRGLACWCEGLPENVEVWDKATNKCG</sequence>
<name>SCX2_CENTE</name>
<proteinExistence type="evidence at protein level"/>
<feature type="chain" id="PRO_0000459143" description="Ct-IT2" evidence="5">
    <location>
        <begin position="1"/>
        <end position="63"/>
    </location>
</feature>
<feature type="domain" description="LCN-type CS-alpha/beta" evidence="4">
    <location>
        <begin position="1"/>
        <end position="63"/>
    </location>
</feature>
<feature type="modified residue" description="Glycine amide" evidence="2">
    <location>
        <position position="63"/>
    </location>
</feature>
<feature type="disulfide bond" evidence="4">
    <location>
        <begin position="11"/>
        <end position="62"/>
    </location>
</feature>
<feature type="disulfide bond" evidence="4">
    <location>
        <begin position="15"/>
        <end position="36"/>
    </location>
</feature>
<feature type="disulfide bond" evidence="4">
    <location>
        <begin position="22"/>
        <end position="43"/>
    </location>
</feature>
<feature type="disulfide bond" evidence="4">
    <location>
        <begin position="26"/>
        <end position="45"/>
    </location>
</feature>
<keyword id="KW-0027">Amidation</keyword>
<keyword id="KW-0903">Direct protein sequencing</keyword>
<keyword id="KW-1015">Disulfide bond</keyword>
<keyword id="KW-0872">Ion channel impairing toxin</keyword>
<keyword id="KW-0528">Neurotoxin</keyword>
<keyword id="KW-0964">Secreted</keyword>
<keyword id="KW-0800">Toxin</keyword>
<keyword id="KW-0738">Voltage-gated sodium channel impairing toxin</keyword>
<dbReference type="SMR" id="P0DRB1"/>
<dbReference type="GO" id="GO:0005576">
    <property type="term" value="C:extracellular region"/>
    <property type="evidence" value="ECO:0007669"/>
    <property type="project" value="UniProtKB-SubCell"/>
</dbReference>
<dbReference type="GO" id="GO:0019871">
    <property type="term" value="F:sodium channel inhibitor activity"/>
    <property type="evidence" value="ECO:0007669"/>
    <property type="project" value="InterPro"/>
</dbReference>
<dbReference type="GO" id="GO:0090729">
    <property type="term" value="F:toxin activity"/>
    <property type="evidence" value="ECO:0007669"/>
    <property type="project" value="UniProtKB-KW"/>
</dbReference>
<dbReference type="GO" id="GO:0006952">
    <property type="term" value="P:defense response"/>
    <property type="evidence" value="ECO:0007669"/>
    <property type="project" value="InterPro"/>
</dbReference>
<dbReference type="CDD" id="cd23106">
    <property type="entry name" value="neurotoxins_LC_scorpion"/>
    <property type="match status" value="1"/>
</dbReference>
<dbReference type="FunFam" id="3.30.30.10:FF:000002">
    <property type="entry name" value="Alpha-like toxin BmK-M1"/>
    <property type="match status" value="1"/>
</dbReference>
<dbReference type="Gene3D" id="3.30.30.10">
    <property type="entry name" value="Knottin, scorpion toxin-like"/>
    <property type="match status" value="1"/>
</dbReference>
<dbReference type="InterPro" id="IPR044062">
    <property type="entry name" value="LCN-type_CS_alpha_beta_dom"/>
</dbReference>
<dbReference type="InterPro" id="IPR003614">
    <property type="entry name" value="Scorpion_toxin-like"/>
</dbReference>
<dbReference type="InterPro" id="IPR036574">
    <property type="entry name" value="Scorpion_toxin-like_sf"/>
</dbReference>
<dbReference type="InterPro" id="IPR018218">
    <property type="entry name" value="Scorpion_toxinL"/>
</dbReference>
<dbReference type="InterPro" id="IPR002061">
    <property type="entry name" value="Scorpion_toxinL/defensin"/>
</dbReference>
<dbReference type="Pfam" id="PF00537">
    <property type="entry name" value="Toxin_3"/>
    <property type="match status" value="1"/>
</dbReference>
<dbReference type="PRINTS" id="PR00285">
    <property type="entry name" value="SCORPNTOXIN"/>
</dbReference>
<dbReference type="SMART" id="SM00505">
    <property type="entry name" value="Knot1"/>
    <property type="match status" value="1"/>
</dbReference>
<dbReference type="SUPFAM" id="SSF57095">
    <property type="entry name" value="Scorpion toxin-like"/>
    <property type="match status" value="1"/>
</dbReference>
<dbReference type="PROSITE" id="PS51863">
    <property type="entry name" value="LCN_CSAB"/>
    <property type="match status" value="1"/>
</dbReference>
<reference key="1">
    <citation type="journal article" date="2022" name="Toxicon">
        <title>Biochemical characterization and insecticidal activity of isolated peptides from the venom of the scorpion Centruroides tecomanus.</title>
        <authorList>
            <person name="Bermudez-Guzman M.J."/>
            <person name="Jimenez-Vargas J.M."/>
            <person name="Possani L.D."/>
            <person name="Zamudio F."/>
            <person name="Orozco-Gutierrez G."/>
            <person name="Oceguera-Contreras E."/>
            <person name="Enriquez-Vara J.N."/>
            <person name="Vazquez-Vuelvas O.F."/>
            <person name="Garcia-Villalvazo P.E."/>
            <person name="Valdez-Velazquez L.L."/>
        </authorList>
    </citation>
    <scope>PROTEIN SEQUENCE</scope>
    <scope>MASS SPECTROMETRY</scope>
    <scope>SUBCELLULAR LOCATION</scope>
    <scope>3D-STRUCTURE MODELING</scope>
    <source>
        <tissue>Venom</tissue>
    </source>
</reference>
<evidence type="ECO:0000250" key="1">
    <source>
        <dbReference type="UniProtKB" id="P0DRB0"/>
    </source>
</evidence>
<evidence type="ECO:0000250" key="2">
    <source>
        <dbReference type="UniProtKB" id="P0DUH9"/>
    </source>
</evidence>
<evidence type="ECO:0000250" key="3">
    <source>
        <dbReference type="UniProtKB" id="P60266"/>
    </source>
</evidence>
<evidence type="ECO:0000255" key="4">
    <source>
        <dbReference type="PROSITE-ProRule" id="PRU01210"/>
    </source>
</evidence>
<evidence type="ECO:0000269" key="5">
    <source>
    </source>
</evidence>
<evidence type="ECO:0000303" key="6">
    <source>
    </source>
</evidence>
<evidence type="ECO:0000305" key="7"/>
<evidence type="ECO:0000305" key="8">
    <source>
    </source>
</evidence>
<organism>
    <name type="scientific">Centruroides tecomanus</name>
    <name type="common">Scorpion</name>
    <name type="synonym">Centruroides limpidus tecomanus</name>
    <dbReference type="NCBI Taxonomy" id="1028682"/>
    <lineage>
        <taxon>Eukaryota</taxon>
        <taxon>Metazoa</taxon>
        <taxon>Ecdysozoa</taxon>
        <taxon>Arthropoda</taxon>
        <taxon>Chelicerata</taxon>
        <taxon>Arachnida</taxon>
        <taxon>Scorpiones</taxon>
        <taxon>Buthida</taxon>
        <taxon>Buthoidea</taxon>
        <taxon>Buthidae</taxon>
        <taxon>Centruroides</taxon>
    </lineage>
</organism>
<protein>
    <recommendedName>
        <fullName evidence="6">Ct-IT2</fullName>
    </recommendedName>
    <alternativeName>
        <fullName evidence="7">Probable beta-insect toxin Ct2</fullName>
    </alternativeName>
</protein>
<comment type="function">
    <text evidence="1 3">Beta toxins bind voltage-independently at site-4 of sodium channels (Nav) and shift the voltage of activation toward more negative potentials thereby affecting sodium channel activation and promoting spontaneous and repetitive firing (By similarity). Is highly active on insects, since it provokes paralysis and death when injected into crickets (By similarity).</text>
</comment>
<comment type="subcellular location">
    <subcellularLocation>
        <location evidence="5">Secreted</location>
    </subcellularLocation>
</comment>
<comment type="tissue specificity">
    <text evidence="8">Expressed by the venom gland.</text>
</comment>
<comment type="domain">
    <text evidence="7">Has the structural arrangement of an alpha-helix connected to antiparallel beta-sheets by disulfide bonds (CS-alpha/beta).</text>
</comment>
<comment type="mass spectrometry"/>
<comment type="similarity">
    <text evidence="7">Belongs to the long (4 C-C) scorpion toxin superfamily. Sodium channel inhibitor family. Beta subfamily.</text>
</comment>
<accession>P0DRB1</accession>